<sequence length="354" mass="38931">MSIQTDDFAPVPPPKRVVSAAPTSPQEEALERALRPKLLQEYVGQAKAREQLEIFIGAARKREEALDHVLLFGPPGLGKTTLSHIIAAELGVNLRQTSGPVLEKPKDLAALLTNLEKNDVLFIDEIHRLSPVVEEILYPALEDYQIDIMIGEGPAARSIKLDLQPFTLVGATTRAGMLTNPLRDRFGIVARLEFYTPEELSRIVTRSAGLLNAPIDAQGAFEIARRSRGTPRIANRLLRRVRDYADVKGDGRITQDIAQRALAMLDVDPQGFDVMDRKLLEAVVHRFDGGPVGLDNIAASIGEEPGTIEDVIEPYLIQQGYLQRTPRGRIATLAAFRHLGVAPSRQHTDLFGPA</sequence>
<feature type="chain" id="PRO_1000001358" description="Holliday junction branch migration complex subunit RuvB">
    <location>
        <begin position="1"/>
        <end position="354"/>
    </location>
</feature>
<feature type="region of interest" description="Disordered" evidence="2">
    <location>
        <begin position="1"/>
        <end position="24"/>
    </location>
</feature>
<feature type="region of interest" description="Large ATPase domain (RuvB-L)" evidence="1">
    <location>
        <begin position="5"/>
        <end position="195"/>
    </location>
</feature>
<feature type="region of interest" description="Small ATPAse domain (RuvB-S)" evidence="1">
    <location>
        <begin position="196"/>
        <end position="266"/>
    </location>
</feature>
<feature type="region of interest" description="Head domain (RuvB-H)" evidence="1">
    <location>
        <begin position="269"/>
        <end position="354"/>
    </location>
</feature>
<feature type="binding site" evidence="1">
    <location>
        <position position="34"/>
    </location>
    <ligand>
        <name>ATP</name>
        <dbReference type="ChEBI" id="CHEBI:30616"/>
    </ligand>
</feature>
<feature type="binding site" evidence="1">
    <location>
        <position position="35"/>
    </location>
    <ligand>
        <name>ATP</name>
        <dbReference type="ChEBI" id="CHEBI:30616"/>
    </ligand>
</feature>
<feature type="binding site" evidence="1">
    <location>
        <position position="76"/>
    </location>
    <ligand>
        <name>ATP</name>
        <dbReference type="ChEBI" id="CHEBI:30616"/>
    </ligand>
</feature>
<feature type="binding site" evidence="1">
    <location>
        <position position="79"/>
    </location>
    <ligand>
        <name>ATP</name>
        <dbReference type="ChEBI" id="CHEBI:30616"/>
    </ligand>
</feature>
<feature type="binding site" evidence="1">
    <location>
        <position position="80"/>
    </location>
    <ligand>
        <name>ATP</name>
        <dbReference type="ChEBI" id="CHEBI:30616"/>
    </ligand>
</feature>
<feature type="binding site" evidence="1">
    <location>
        <position position="80"/>
    </location>
    <ligand>
        <name>Mg(2+)</name>
        <dbReference type="ChEBI" id="CHEBI:18420"/>
    </ligand>
</feature>
<feature type="binding site" evidence="1">
    <location>
        <position position="81"/>
    </location>
    <ligand>
        <name>ATP</name>
        <dbReference type="ChEBI" id="CHEBI:30616"/>
    </ligand>
</feature>
<feature type="binding site" evidence="1">
    <location>
        <begin position="142"/>
        <end position="144"/>
    </location>
    <ligand>
        <name>ATP</name>
        <dbReference type="ChEBI" id="CHEBI:30616"/>
    </ligand>
</feature>
<feature type="binding site" evidence="1">
    <location>
        <position position="185"/>
    </location>
    <ligand>
        <name>ATP</name>
        <dbReference type="ChEBI" id="CHEBI:30616"/>
    </ligand>
</feature>
<feature type="binding site" evidence="1">
    <location>
        <position position="195"/>
    </location>
    <ligand>
        <name>ATP</name>
        <dbReference type="ChEBI" id="CHEBI:30616"/>
    </ligand>
</feature>
<feature type="binding site" evidence="1">
    <location>
        <position position="232"/>
    </location>
    <ligand>
        <name>ATP</name>
        <dbReference type="ChEBI" id="CHEBI:30616"/>
    </ligand>
</feature>
<feature type="binding site" evidence="1">
    <location>
        <position position="324"/>
    </location>
    <ligand>
        <name>DNA</name>
        <dbReference type="ChEBI" id="CHEBI:16991"/>
    </ligand>
</feature>
<feature type="binding site" evidence="1">
    <location>
        <position position="329"/>
    </location>
    <ligand>
        <name>DNA</name>
        <dbReference type="ChEBI" id="CHEBI:16991"/>
    </ligand>
</feature>
<protein>
    <recommendedName>
        <fullName evidence="1">Holliday junction branch migration complex subunit RuvB</fullName>
        <ecNumber evidence="1">3.6.4.-</ecNumber>
    </recommendedName>
</protein>
<accession>A1TUY9</accession>
<dbReference type="EC" id="3.6.4.-" evidence="1"/>
<dbReference type="EMBL" id="CP000512">
    <property type="protein sequence ID" value="ABM34777.1"/>
    <property type="molecule type" value="Genomic_DNA"/>
</dbReference>
<dbReference type="RefSeq" id="WP_011797251.1">
    <property type="nucleotide sequence ID" value="NC_008752.1"/>
</dbReference>
<dbReference type="SMR" id="A1TUY9"/>
<dbReference type="STRING" id="397945.Aave_4237"/>
<dbReference type="GeneID" id="79789204"/>
<dbReference type="KEGG" id="aav:Aave_4237"/>
<dbReference type="eggNOG" id="COG2255">
    <property type="taxonomic scope" value="Bacteria"/>
</dbReference>
<dbReference type="HOGENOM" id="CLU_055599_1_0_4"/>
<dbReference type="OrthoDB" id="9804478at2"/>
<dbReference type="Proteomes" id="UP000002596">
    <property type="component" value="Chromosome"/>
</dbReference>
<dbReference type="GO" id="GO:0005737">
    <property type="term" value="C:cytoplasm"/>
    <property type="evidence" value="ECO:0007669"/>
    <property type="project" value="UniProtKB-SubCell"/>
</dbReference>
<dbReference type="GO" id="GO:0048476">
    <property type="term" value="C:Holliday junction resolvase complex"/>
    <property type="evidence" value="ECO:0007669"/>
    <property type="project" value="UniProtKB-UniRule"/>
</dbReference>
<dbReference type="GO" id="GO:0005524">
    <property type="term" value="F:ATP binding"/>
    <property type="evidence" value="ECO:0007669"/>
    <property type="project" value="UniProtKB-UniRule"/>
</dbReference>
<dbReference type="GO" id="GO:0016887">
    <property type="term" value="F:ATP hydrolysis activity"/>
    <property type="evidence" value="ECO:0007669"/>
    <property type="project" value="InterPro"/>
</dbReference>
<dbReference type="GO" id="GO:0000400">
    <property type="term" value="F:four-way junction DNA binding"/>
    <property type="evidence" value="ECO:0007669"/>
    <property type="project" value="UniProtKB-UniRule"/>
</dbReference>
<dbReference type="GO" id="GO:0009378">
    <property type="term" value="F:four-way junction helicase activity"/>
    <property type="evidence" value="ECO:0007669"/>
    <property type="project" value="InterPro"/>
</dbReference>
<dbReference type="GO" id="GO:0006310">
    <property type="term" value="P:DNA recombination"/>
    <property type="evidence" value="ECO:0007669"/>
    <property type="project" value="UniProtKB-UniRule"/>
</dbReference>
<dbReference type="GO" id="GO:0006281">
    <property type="term" value="P:DNA repair"/>
    <property type="evidence" value="ECO:0007669"/>
    <property type="project" value="UniProtKB-UniRule"/>
</dbReference>
<dbReference type="CDD" id="cd00009">
    <property type="entry name" value="AAA"/>
    <property type="match status" value="1"/>
</dbReference>
<dbReference type="FunFam" id="1.10.10.10:FF:000086">
    <property type="entry name" value="Holliday junction ATP-dependent DNA helicase RuvB"/>
    <property type="match status" value="1"/>
</dbReference>
<dbReference type="FunFam" id="1.10.8.60:FF:000023">
    <property type="entry name" value="Holliday junction ATP-dependent DNA helicase RuvB"/>
    <property type="match status" value="1"/>
</dbReference>
<dbReference type="FunFam" id="3.40.50.300:FF:000073">
    <property type="entry name" value="Holliday junction ATP-dependent DNA helicase RuvB"/>
    <property type="match status" value="1"/>
</dbReference>
<dbReference type="Gene3D" id="1.10.8.60">
    <property type="match status" value="1"/>
</dbReference>
<dbReference type="Gene3D" id="3.40.50.300">
    <property type="entry name" value="P-loop containing nucleotide triphosphate hydrolases"/>
    <property type="match status" value="1"/>
</dbReference>
<dbReference type="Gene3D" id="1.10.10.10">
    <property type="entry name" value="Winged helix-like DNA-binding domain superfamily/Winged helix DNA-binding domain"/>
    <property type="match status" value="1"/>
</dbReference>
<dbReference type="HAMAP" id="MF_00016">
    <property type="entry name" value="DNA_HJ_migration_RuvB"/>
    <property type="match status" value="1"/>
</dbReference>
<dbReference type="InterPro" id="IPR003593">
    <property type="entry name" value="AAA+_ATPase"/>
</dbReference>
<dbReference type="InterPro" id="IPR041445">
    <property type="entry name" value="AAA_lid_4"/>
</dbReference>
<dbReference type="InterPro" id="IPR004605">
    <property type="entry name" value="DNA_helicase_Holl-junc_RuvB"/>
</dbReference>
<dbReference type="InterPro" id="IPR027417">
    <property type="entry name" value="P-loop_NTPase"/>
</dbReference>
<dbReference type="InterPro" id="IPR008824">
    <property type="entry name" value="RuvB-like_N"/>
</dbReference>
<dbReference type="InterPro" id="IPR008823">
    <property type="entry name" value="RuvB_C"/>
</dbReference>
<dbReference type="InterPro" id="IPR036388">
    <property type="entry name" value="WH-like_DNA-bd_sf"/>
</dbReference>
<dbReference type="InterPro" id="IPR036390">
    <property type="entry name" value="WH_DNA-bd_sf"/>
</dbReference>
<dbReference type="NCBIfam" id="NF000868">
    <property type="entry name" value="PRK00080.1"/>
    <property type="match status" value="1"/>
</dbReference>
<dbReference type="NCBIfam" id="TIGR00635">
    <property type="entry name" value="ruvB"/>
    <property type="match status" value="1"/>
</dbReference>
<dbReference type="PANTHER" id="PTHR42848">
    <property type="match status" value="1"/>
</dbReference>
<dbReference type="PANTHER" id="PTHR42848:SF1">
    <property type="entry name" value="HOLLIDAY JUNCTION BRANCH MIGRATION COMPLEX SUBUNIT RUVB"/>
    <property type="match status" value="1"/>
</dbReference>
<dbReference type="Pfam" id="PF17864">
    <property type="entry name" value="AAA_lid_4"/>
    <property type="match status" value="1"/>
</dbReference>
<dbReference type="Pfam" id="PF05491">
    <property type="entry name" value="RuvB_C"/>
    <property type="match status" value="1"/>
</dbReference>
<dbReference type="Pfam" id="PF05496">
    <property type="entry name" value="RuvB_N"/>
    <property type="match status" value="1"/>
</dbReference>
<dbReference type="SMART" id="SM00382">
    <property type="entry name" value="AAA"/>
    <property type="match status" value="1"/>
</dbReference>
<dbReference type="SUPFAM" id="SSF52540">
    <property type="entry name" value="P-loop containing nucleoside triphosphate hydrolases"/>
    <property type="match status" value="1"/>
</dbReference>
<dbReference type="SUPFAM" id="SSF46785">
    <property type="entry name" value="Winged helix' DNA-binding domain"/>
    <property type="match status" value="1"/>
</dbReference>
<keyword id="KW-0067">ATP-binding</keyword>
<keyword id="KW-0963">Cytoplasm</keyword>
<keyword id="KW-0227">DNA damage</keyword>
<keyword id="KW-0233">DNA recombination</keyword>
<keyword id="KW-0234">DNA repair</keyword>
<keyword id="KW-0238">DNA-binding</keyword>
<keyword id="KW-0378">Hydrolase</keyword>
<keyword id="KW-0547">Nucleotide-binding</keyword>
<proteinExistence type="inferred from homology"/>
<comment type="function">
    <text evidence="1">The RuvA-RuvB-RuvC complex processes Holliday junction (HJ) DNA during genetic recombination and DNA repair, while the RuvA-RuvB complex plays an important role in the rescue of blocked DNA replication forks via replication fork reversal (RFR). RuvA specifically binds to HJ cruciform DNA, conferring on it an open structure. The RuvB hexamer acts as an ATP-dependent pump, pulling dsDNA into and through the RuvAB complex. RuvB forms 2 homohexamers on either side of HJ DNA bound by 1 or 2 RuvA tetramers; 4 subunits per hexamer contact DNA at a time. Coordinated motions by a converter formed by DNA-disengaged RuvB subunits stimulates ATP hydrolysis and nucleotide exchange. Immobilization of the converter enables RuvB to convert the ATP-contained energy into a lever motion, pulling 2 nucleotides of DNA out of the RuvA tetramer per ATP hydrolyzed, thus driving DNA branch migration. The RuvB motors rotate together with the DNA substrate, which together with the progressing nucleotide cycle form the mechanistic basis for DNA recombination by continuous HJ branch migration. Branch migration allows RuvC to scan DNA until it finds its consensus sequence, where it cleaves and resolves cruciform DNA.</text>
</comment>
<comment type="catalytic activity">
    <reaction evidence="1">
        <text>ATP + H2O = ADP + phosphate + H(+)</text>
        <dbReference type="Rhea" id="RHEA:13065"/>
        <dbReference type="ChEBI" id="CHEBI:15377"/>
        <dbReference type="ChEBI" id="CHEBI:15378"/>
        <dbReference type="ChEBI" id="CHEBI:30616"/>
        <dbReference type="ChEBI" id="CHEBI:43474"/>
        <dbReference type="ChEBI" id="CHEBI:456216"/>
    </reaction>
</comment>
<comment type="subunit">
    <text evidence="1">Homohexamer. Forms an RuvA(8)-RuvB(12)-Holliday junction (HJ) complex. HJ DNA is sandwiched between 2 RuvA tetramers; dsDNA enters through RuvA and exits via RuvB. An RuvB hexamer assembles on each DNA strand where it exits the tetramer. Each RuvB hexamer is contacted by two RuvA subunits (via domain III) on 2 adjacent RuvB subunits; this complex drives branch migration. In the full resolvosome a probable DNA-RuvA(4)-RuvB(12)-RuvC(2) complex forms which resolves the HJ.</text>
</comment>
<comment type="subcellular location">
    <subcellularLocation>
        <location evidence="1">Cytoplasm</location>
    </subcellularLocation>
</comment>
<comment type="domain">
    <text evidence="1">Has 3 domains, the large (RuvB-L) and small ATPase (RuvB-S) domains and the C-terminal head (RuvB-H) domain. The head domain binds DNA, while the ATPase domains jointly bind ATP, ADP or are empty depending on the state of the subunit in the translocation cycle. During a single DNA translocation step the structure of each domain remains the same, but their relative positions change.</text>
</comment>
<comment type="similarity">
    <text evidence="1">Belongs to the RuvB family.</text>
</comment>
<name>RUVB_PARC0</name>
<reference key="1">
    <citation type="submission" date="2006-12" db="EMBL/GenBank/DDBJ databases">
        <title>Complete sequence of Acidovorax avenae subsp. citrulli AAC00-1.</title>
        <authorList>
            <person name="Copeland A."/>
            <person name="Lucas S."/>
            <person name="Lapidus A."/>
            <person name="Barry K."/>
            <person name="Detter J.C."/>
            <person name="Glavina del Rio T."/>
            <person name="Dalin E."/>
            <person name="Tice H."/>
            <person name="Pitluck S."/>
            <person name="Kiss H."/>
            <person name="Brettin T."/>
            <person name="Bruce D."/>
            <person name="Han C."/>
            <person name="Tapia R."/>
            <person name="Gilna P."/>
            <person name="Schmutz J."/>
            <person name="Larimer F."/>
            <person name="Land M."/>
            <person name="Hauser L."/>
            <person name="Kyrpides N."/>
            <person name="Kim E."/>
            <person name="Stahl D."/>
            <person name="Richardson P."/>
        </authorList>
    </citation>
    <scope>NUCLEOTIDE SEQUENCE [LARGE SCALE GENOMIC DNA]</scope>
    <source>
        <strain>AAC00-1</strain>
    </source>
</reference>
<organism>
    <name type="scientific">Paracidovorax citrulli (strain AAC00-1)</name>
    <name type="common">Acidovorax citrulli</name>
    <dbReference type="NCBI Taxonomy" id="397945"/>
    <lineage>
        <taxon>Bacteria</taxon>
        <taxon>Pseudomonadati</taxon>
        <taxon>Pseudomonadota</taxon>
        <taxon>Betaproteobacteria</taxon>
        <taxon>Burkholderiales</taxon>
        <taxon>Comamonadaceae</taxon>
        <taxon>Paracidovorax</taxon>
    </lineage>
</organism>
<evidence type="ECO:0000255" key="1">
    <source>
        <dbReference type="HAMAP-Rule" id="MF_00016"/>
    </source>
</evidence>
<evidence type="ECO:0000256" key="2">
    <source>
        <dbReference type="SAM" id="MobiDB-lite"/>
    </source>
</evidence>
<gene>
    <name evidence="1" type="primary">ruvB</name>
    <name type="ordered locus">Aave_4237</name>
</gene>